<keyword id="KW-0002">3D-structure</keyword>
<keyword id="KW-0963">Cytoplasm</keyword>
<keyword id="KW-1185">Reference proteome</keyword>
<feature type="chain" id="PRO_0000238641" description="Uncharacterized protein YPL067C">
    <location>
        <begin position="1"/>
        <end position="198"/>
    </location>
</feature>
<feature type="sequence conflict" description="In Ref. 3; AAS56658." evidence="3" ref="3">
    <original>K</original>
    <variation>E</variation>
    <location>
        <position position="78"/>
    </location>
</feature>
<feature type="helix" evidence="4">
    <location>
        <begin position="18"/>
        <end position="27"/>
    </location>
</feature>
<feature type="helix" evidence="4">
    <location>
        <begin position="30"/>
        <end position="32"/>
    </location>
</feature>
<feature type="helix" evidence="4">
    <location>
        <begin position="37"/>
        <end position="50"/>
    </location>
</feature>
<feature type="helix" evidence="4">
    <location>
        <begin position="55"/>
        <end position="63"/>
    </location>
</feature>
<feature type="helix" evidence="4">
    <location>
        <begin position="83"/>
        <end position="85"/>
    </location>
</feature>
<feature type="strand" evidence="4">
    <location>
        <begin position="86"/>
        <end position="90"/>
    </location>
</feature>
<feature type="strand" evidence="4">
    <location>
        <begin position="101"/>
        <end position="110"/>
    </location>
</feature>
<feature type="helix" evidence="4">
    <location>
        <begin position="119"/>
        <end position="134"/>
    </location>
</feature>
<feature type="helix" evidence="4">
    <location>
        <begin position="137"/>
        <end position="139"/>
    </location>
</feature>
<feature type="helix" evidence="4">
    <location>
        <begin position="140"/>
        <end position="145"/>
    </location>
</feature>
<feature type="strand" evidence="4">
    <location>
        <begin position="148"/>
        <end position="151"/>
    </location>
</feature>
<feature type="turn" evidence="4">
    <location>
        <begin position="155"/>
        <end position="157"/>
    </location>
</feature>
<feature type="strand" evidence="4">
    <location>
        <begin position="163"/>
        <end position="171"/>
    </location>
</feature>
<feature type="turn" evidence="4">
    <location>
        <begin position="174"/>
        <end position="176"/>
    </location>
</feature>
<feature type="helix" evidence="4">
    <location>
        <begin position="179"/>
        <end position="192"/>
    </location>
</feature>
<accession>Q02754</accession>
<accession>D6W3U8</accession>
<accession>Q6Q586</accession>
<protein>
    <recommendedName>
        <fullName>Uncharacterized protein YPL067C</fullName>
    </recommendedName>
</protein>
<proteinExistence type="evidence at protein level"/>
<comment type="subcellular location">
    <subcellularLocation>
        <location evidence="1">Cytoplasm</location>
    </subcellularLocation>
</comment>
<comment type="miscellaneous">
    <text evidence="2">Present with 1470 molecules/cell in log phase SD medium.</text>
</comment>
<dbReference type="EMBL" id="U39205">
    <property type="protein sequence ID" value="AAB68298.1"/>
    <property type="molecule type" value="Genomic_DNA"/>
</dbReference>
<dbReference type="EMBL" id="AY558332">
    <property type="protein sequence ID" value="AAS56658.1"/>
    <property type="molecule type" value="Genomic_DNA"/>
</dbReference>
<dbReference type="EMBL" id="BK006949">
    <property type="protein sequence ID" value="DAA11364.1"/>
    <property type="molecule type" value="Genomic_DNA"/>
</dbReference>
<dbReference type="PIR" id="S60923">
    <property type="entry name" value="S60923"/>
</dbReference>
<dbReference type="PDB" id="5KCI">
    <property type="method" value="X-ray"/>
    <property type="resolution" value="1.83 A"/>
    <property type="chains" value="A=1-198"/>
</dbReference>
<dbReference type="PDBsum" id="5KCI"/>
<dbReference type="SMR" id="Q02754"/>
<dbReference type="BioGRID" id="36112">
    <property type="interactions" value="38"/>
</dbReference>
<dbReference type="DIP" id="DIP-2833N"/>
<dbReference type="FunCoup" id="Q02754">
    <property type="interactions" value="2"/>
</dbReference>
<dbReference type="IntAct" id="Q02754">
    <property type="interactions" value="2"/>
</dbReference>
<dbReference type="MINT" id="Q02754"/>
<dbReference type="STRING" id="4932.YPL067C"/>
<dbReference type="iPTMnet" id="Q02754"/>
<dbReference type="PaxDb" id="4932-YPL067C"/>
<dbReference type="PeptideAtlas" id="Q02754"/>
<dbReference type="EnsemblFungi" id="YPL067C_mRNA">
    <property type="protein sequence ID" value="YPL067C"/>
    <property type="gene ID" value="YPL067C"/>
</dbReference>
<dbReference type="KEGG" id="sce:YPL067C"/>
<dbReference type="AGR" id="SGD:S000005988"/>
<dbReference type="SGD" id="S000005988">
    <property type="gene designation" value="YPL067C"/>
</dbReference>
<dbReference type="VEuPathDB" id="FungiDB:YPL067C"/>
<dbReference type="eggNOG" id="ENOG502S263">
    <property type="taxonomic scope" value="Eukaryota"/>
</dbReference>
<dbReference type="HOGENOM" id="CLU_075862_2_1_1"/>
<dbReference type="InParanoid" id="Q02754"/>
<dbReference type="OMA" id="YHDWEDL"/>
<dbReference type="OrthoDB" id="10053431at2759"/>
<dbReference type="BioCyc" id="YEAST:G3O-33976-MONOMER"/>
<dbReference type="BioGRID-ORCS" id="856038">
    <property type="hits" value="0 hits in 10 CRISPR screens"/>
</dbReference>
<dbReference type="PRO" id="PR:Q02754"/>
<dbReference type="Proteomes" id="UP000002311">
    <property type="component" value="Chromosome XVI"/>
</dbReference>
<dbReference type="RNAct" id="Q02754">
    <property type="molecule type" value="protein"/>
</dbReference>
<dbReference type="GO" id="GO:0005737">
    <property type="term" value="C:cytoplasm"/>
    <property type="evidence" value="ECO:0007005"/>
    <property type="project" value="SGD"/>
</dbReference>
<dbReference type="GO" id="GO:0006044">
    <property type="term" value="P:N-acetylglucosamine metabolic process"/>
    <property type="evidence" value="ECO:0000318"/>
    <property type="project" value="GO_Central"/>
</dbReference>
<dbReference type="InterPro" id="IPR022036">
    <property type="entry name" value="DUF3605"/>
</dbReference>
<dbReference type="PANTHER" id="PTHR35020">
    <property type="entry name" value="N-ACETYLGLUCOSAMINE-INDUCED PROTEIN 1"/>
    <property type="match status" value="1"/>
</dbReference>
<dbReference type="PANTHER" id="PTHR35020:SF2">
    <property type="entry name" value="N-ACETYLGLUCOSAMINE-INDUCED PROTEIN 1"/>
    <property type="match status" value="1"/>
</dbReference>
<dbReference type="Pfam" id="PF12239">
    <property type="entry name" value="DUF3605"/>
    <property type="match status" value="1"/>
</dbReference>
<sequence length="198" mass="22776">MQQDIVNDHQEEAQGWKWEQIKEIIESGELARLKRSRQMTDKYHEHKKRTAGLDMNQYVLQKLGWSLDEPQLENAAAKAFSSSTLYAVRANDFPYNFEPGVVHLVLWSKVALPVHSPDKAVREAARARMNAFLQAQPLLRPLLSSGHVAWFVNYPELQSVARIFHAHVLLFFPRERYSAEQVKTTVDDILSHGFEPLA</sequence>
<organism>
    <name type="scientific">Saccharomyces cerevisiae (strain ATCC 204508 / S288c)</name>
    <name type="common">Baker's yeast</name>
    <dbReference type="NCBI Taxonomy" id="559292"/>
    <lineage>
        <taxon>Eukaryota</taxon>
        <taxon>Fungi</taxon>
        <taxon>Dikarya</taxon>
        <taxon>Ascomycota</taxon>
        <taxon>Saccharomycotina</taxon>
        <taxon>Saccharomycetes</taxon>
        <taxon>Saccharomycetales</taxon>
        <taxon>Saccharomycetaceae</taxon>
        <taxon>Saccharomyces</taxon>
    </lineage>
</organism>
<evidence type="ECO:0000269" key="1">
    <source>
    </source>
</evidence>
<evidence type="ECO:0000269" key="2">
    <source>
    </source>
</evidence>
<evidence type="ECO:0000305" key="3"/>
<evidence type="ECO:0007829" key="4">
    <source>
        <dbReference type="PDB" id="5KCI"/>
    </source>
</evidence>
<reference key="1">
    <citation type="journal article" date="1997" name="Nature">
        <title>The nucleotide sequence of Saccharomyces cerevisiae chromosome XVI.</title>
        <authorList>
            <person name="Bussey H."/>
            <person name="Storms R.K."/>
            <person name="Ahmed A."/>
            <person name="Albermann K."/>
            <person name="Allen E."/>
            <person name="Ansorge W."/>
            <person name="Araujo R."/>
            <person name="Aparicio A."/>
            <person name="Barrell B.G."/>
            <person name="Badcock K."/>
            <person name="Benes V."/>
            <person name="Botstein D."/>
            <person name="Bowman S."/>
            <person name="Brueckner M."/>
            <person name="Carpenter J."/>
            <person name="Cherry J.M."/>
            <person name="Chung E."/>
            <person name="Churcher C.M."/>
            <person name="Coster F."/>
            <person name="Davis K."/>
            <person name="Davis R.W."/>
            <person name="Dietrich F.S."/>
            <person name="Delius H."/>
            <person name="DiPaolo T."/>
            <person name="Dubois E."/>
            <person name="Duesterhoeft A."/>
            <person name="Duncan M."/>
            <person name="Floeth M."/>
            <person name="Fortin N."/>
            <person name="Friesen J.D."/>
            <person name="Fritz C."/>
            <person name="Goffeau A."/>
            <person name="Hall J."/>
            <person name="Hebling U."/>
            <person name="Heumann K."/>
            <person name="Hilbert H."/>
            <person name="Hillier L.W."/>
            <person name="Hunicke-Smith S."/>
            <person name="Hyman R.W."/>
            <person name="Johnston M."/>
            <person name="Kalman S."/>
            <person name="Kleine K."/>
            <person name="Komp C."/>
            <person name="Kurdi O."/>
            <person name="Lashkari D."/>
            <person name="Lew H."/>
            <person name="Lin A."/>
            <person name="Lin D."/>
            <person name="Louis E.J."/>
            <person name="Marathe R."/>
            <person name="Messenguy F."/>
            <person name="Mewes H.-W."/>
            <person name="Mirtipati S."/>
            <person name="Moestl D."/>
            <person name="Mueller-Auer S."/>
            <person name="Namath A."/>
            <person name="Nentwich U."/>
            <person name="Oefner P."/>
            <person name="Pearson D."/>
            <person name="Petel F.X."/>
            <person name="Pohl T.M."/>
            <person name="Purnelle B."/>
            <person name="Rajandream M.A."/>
            <person name="Rechmann S."/>
            <person name="Rieger M."/>
            <person name="Riles L."/>
            <person name="Roberts D."/>
            <person name="Schaefer M."/>
            <person name="Scharfe M."/>
            <person name="Scherens B."/>
            <person name="Schramm S."/>
            <person name="Schroeder M."/>
            <person name="Sdicu A.-M."/>
            <person name="Tettelin H."/>
            <person name="Urrestarazu L.A."/>
            <person name="Ushinsky S."/>
            <person name="Vierendeels F."/>
            <person name="Vissers S."/>
            <person name="Voss H."/>
            <person name="Walsh S.V."/>
            <person name="Wambutt R."/>
            <person name="Wang Y."/>
            <person name="Wedler E."/>
            <person name="Wedler H."/>
            <person name="Winnett E."/>
            <person name="Zhong W.-W."/>
            <person name="Zollner A."/>
            <person name="Vo D.H."/>
            <person name="Hani J."/>
        </authorList>
    </citation>
    <scope>NUCLEOTIDE SEQUENCE [LARGE SCALE GENOMIC DNA]</scope>
    <source>
        <strain>ATCC 204508 / S288c</strain>
    </source>
</reference>
<reference key="2">
    <citation type="journal article" date="2014" name="G3 (Bethesda)">
        <title>The reference genome sequence of Saccharomyces cerevisiae: Then and now.</title>
        <authorList>
            <person name="Engel S.R."/>
            <person name="Dietrich F.S."/>
            <person name="Fisk D.G."/>
            <person name="Binkley G."/>
            <person name="Balakrishnan R."/>
            <person name="Costanzo M.C."/>
            <person name="Dwight S.S."/>
            <person name="Hitz B.C."/>
            <person name="Karra K."/>
            <person name="Nash R.S."/>
            <person name="Weng S."/>
            <person name="Wong E.D."/>
            <person name="Lloyd P."/>
            <person name="Skrzypek M.S."/>
            <person name="Miyasato S.R."/>
            <person name="Simison M."/>
            <person name="Cherry J.M."/>
        </authorList>
    </citation>
    <scope>GENOME REANNOTATION</scope>
    <source>
        <strain>ATCC 204508 / S288c</strain>
    </source>
</reference>
<reference key="3">
    <citation type="journal article" date="2007" name="Genome Res.">
        <title>Approaching a complete repository of sequence-verified protein-encoding clones for Saccharomyces cerevisiae.</title>
        <authorList>
            <person name="Hu Y."/>
            <person name="Rolfs A."/>
            <person name="Bhullar B."/>
            <person name="Murthy T.V.S."/>
            <person name="Zhu C."/>
            <person name="Berger M.F."/>
            <person name="Camargo A.A."/>
            <person name="Kelley F."/>
            <person name="McCarron S."/>
            <person name="Jepson D."/>
            <person name="Richardson A."/>
            <person name="Raphael J."/>
            <person name="Moreira D."/>
            <person name="Taycher E."/>
            <person name="Zuo D."/>
            <person name="Mohr S."/>
            <person name="Kane M.F."/>
            <person name="Williamson J."/>
            <person name="Simpson A.J.G."/>
            <person name="Bulyk M.L."/>
            <person name="Harlow E."/>
            <person name="Marsischky G."/>
            <person name="Kolodner R.D."/>
            <person name="LaBaer J."/>
        </authorList>
    </citation>
    <scope>NUCLEOTIDE SEQUENCE [GENOMIC DNA]</scope>
    <source>
        <strain>ATCC 204508 / S288c</strain>
    </source>
</reference>
<reference key="4">
    <citation type="journal article" date="2003" name="Nature">
        <title>Global analysis of protein localization in budding yeast.</title>
        <authorList>
            <person name="Huh W.-K."/>
            <person name="Falvo J.V."/>
            <person name="Gerke L.C."/>
            <person name="Carroll A.S."/>
            <person name="Howson R.W."/>
            <person name="Weissman J.S."/>
            <person name="O'Shea E.K."/>
        </authorList>
    </citation>
    <scope>SUBCELLULAR LOCATION [LARGE SCALE ANALYSIS]</scope>
</reference>
<reference key="5">
    <citation type="journal article" date="2003" name="Nature">
        <title>Global analysis of protein expression in yeast.</title>
        <authorList>
            <person name="Ghaemmaghami S."/>
            <person name="Huh W.-K."/>
            <person name="Bower K."/>
            <person name="Howson R.W."/>
            <person name="Belle A."/>
            <person name="Dephoure N."/>
            <person name="O'Shea E.K."/>
            <person name="Weissman J.S."/>
        </authorList>
    </citation>
    <scope>LEVEL OF PROTEIN EXPRESSION [LARGE SCALE ANALYSIS]</scope>
</reference>
<name>YP067_YEAST</name>
<gene>
    <name type="ordered locus">YPL067C</name>
</gene>